<protein>
    <recommendedName>
        <fullName evidence="1">Malonate-semialdehyde dehydrogenase 1</fullName>
        <shortName evidence="1">MSA dehydrogenase 1</shortName>
        <ecNumber evidence="1">1.2.1.27</ecNumber>
    </recommendedName>
    <alternativeName>
        <fullName evidence="1">Methylmalonate-semialdehyde dehydrogenase 1</fullName>
        <shortName evidence="1">MMSA dehydrogenase 1</shortName>
        <shortName evidence="1">MSDH 1</shortName>
    </alternativeName>
</protein>
<gene>
    <name evidence="1" type="primary">iolA1</name>
    <name type="ordered locus">OB0816</name>
</gene>
<sequence>MISSETKHMQNYINGKWVDAKSGKQEVIPNPATGETIATVTISDVEDVDMAVAAAKEVFPEWSDIPVPNRTRYLLDYWKLLQDNKEELAKIITLENGKSLRDAQGEVQRGIEVVELATSTPSMMMGDALPSIAKGIDGSIWRYPLGVVAGITPFNFPMMVPLWMFPLAIACGNTFVLKTSERTPILAERLVELFYEAGFPKGVLNLVHGGKEVVNRFLTHPDIEAVSFVGSEPVAKHVYQTGTAHGKRVQALAGAKNHAVVMPDCDVEKTIQGVLGAAFGSSGERCMACSVVAVVDDIADEFLEKLVKETKKLRVGDGMDDSNFIGPVIRESHKERVLSYIDSGVDEGAHLLVDGRKIKEETPDGYYVGATIFDHVTQDMKIWQDEIFAPVLSVVRVSDLEEGIRVTNQSKFANGAVIYTNSGKSAQQFRNRIDAGMIGVNVNVPAPMAFFSFAGNKASFYGDLGTNGKDGVQFYTRKKVVTERWF</sequence>
<feature type="chain" id="PRO_0000352348" description="Malonate-semialdehyde dehydrogenase 1">
    <location>
        <begin position="1"/>
        <end position="486"/>
    </location>
</feature>
<feature type="active site" description="Nucleophile" evidence="1">
    <location>
        <position position="286"/>
    </location>
</feature>
<feature type="binding site" evidence="1">
    <location>
        <position position="154"/>
    </location>
    <ligand>
        <name>NAD(+)</name>
        <dbReference type="ChEBI" id="CHEBI:57540"/>
    </ligand>
</feature>
<feature type="binding site" evidence="1">
    <location>
        <position position="178"/>
    </location>
    <ligand>
        <name>NAD(+)</name>
        <dbReference type="ChEBI" id="CHEBI:57540"/>
    </ligand>
</feature>
<feature type="binding site" evidence="1">
    <location>
        <position position="181"/>
    </location>
    <ligand>
        <name>NAD(+)</name>
        <dbReference type="ChEBI" id="CHEBI:57540"/>
    </ligand>
</feature>
<feature type="binding site" evidence="1">
    <location>
        <position position="182"/>
    </location>
    <ligand>
        <name>NAD(+)</name>
        <dbReference type="ChEBI" id="CHEBI:57540"/>
    </ligand>
</feature>
<feature type="binding site" evidence="1">
    <location>
        <position position="231"/>
    </location>
    <ligand>
        <name>NAD(+)</name>
        <dbReference type="ChEBI" id="CHEBI:57540"/>
    </ligand>
</feature>
<feature type="binding site" evidence="1">
    <location>
        <position position="386"/>
    </location>
    <ligand>
        <name>NAD(+)</name>
        <dbReference type="ChEBI" id="CHEBI:57540"/>
    </ligand>
</feature>
<organism>
    <name type="scientific">Oceanobacillus iheyensis (strain DSM 14371 / CIP 107618 / JCM 11309 / KCTC 3954 / HTE831)</name>
    <dbReference type="NCBI Taxonomy" id="221109"/>
    <lineage>
        <taxon>Bacteria</taxon>
        <taxon>Bacillati</taxon>
        <taxon>Bacillota</taxon>
        <taxon>Bacilli</taxon>
        <taxon>Bacillales</taxon>
        <taxon>Bacillaceae</taxon>
        <taxon>Oceanobacillus</taxon>
    </lineage>
</organism>
<accession>Q8ES27</accession>
<keyword id="KW-0520">NAD</keyword>
<keyword id="KW-0560">Oxidoreductase</keyword>
<keyword id="KW-1185">Reference proteome</keyword>
<evidence type="ECO:0000255" key="1">
    <source>
        <dbReference type="HAMAP-Rule" id="MF_01670"/>
    </source>
</evidence>
<reference key="1">
    <citation type="journal article" date="2002" name="Nucleic Acids Res.">
        <title>Genome sequence of Oceanobacillus iheyensis isolated from the Iheya Ridge and its unexpected adaptive capabilities to extreme environments.</title>
        <authorList>
            <person name="Takami H."/>
            <person name="Takaki Y."/>
            <person name="Uchiyama I."/>
        </authorList>
    </citation>
    <scope>NUCLEOTIDE SEQUENCE [LARGE SCALE GENOMIC DNA]</scope>
    <source>
        <strain>DSM 14371 / CIP 107618 / JCM 11309 / KCTC 3954 / HTE831</strain>
    </source>
</reference>
<dbReference type="EC" id="1.2.1.27" evidence="1"/>
<dbReference type="EMBL" id="BA000028">
    <property type="protein sequence ID" value="BAC12772.1"/>
    <property type="molecule type" value="Genomic_DNA"/>
</dbReference>
<dbReference type="RefSeq" id="WP_011065222.1">
    <property type="nucleotide sequence ID" value="NC_004193.1"/>
</dbReference>
<dbReference type="SMR" id="Q8ES27"/>
<dbReference type="STRING" id="221109.gene:10733037"/>
<dbReference type="KEGG" id="oih:OB0816"/>
<dbReference type="eggNOG" id="COG1012">
    <property type="taxonomic scope" value="Bacteria"/>
</dbReference>
<dbReference type="HOGENOM" id="CLU_005391_1_10_9"/>
<dbReference type="OrthoDB" id="9762913at2"/>
<dbReference type="PhylomeDB" id="Q8ES27"/>
<dbReference type="UniPathway" id="UPA00076">
    <property type="reaction ID" value="UER00148"/>
</dbReference>
<dbReference type="Proteomes" id="UP000000822">
    <property type="component" value="Chromosome"/>
</dbReference>
<dbReference type="GO" id="GO:0018478">
    <property type="term" value="F:malonate-semialdehyde dehydrogenase (acetylating) activity"/>
    <property type="evidence" value="ECO:0007669"/>
    <property type="project" value="UniProtKB-UniRule"/>
</dbReference>
<dbReference type="GO" id="GO:0004491">
    <property type="term" value="F:methylmalonate-semialdehyde dehydrogenase (acylating, NAD) activity"/>
    <property type="evidence" value="ECO:0007669"/>
    <property type="project" value="UniProtKB-UniRule"/>
</dbReference>
<dbReference type="GO" id="GO:0019310">
    <property type="term" value="P:inositol catabolic process"/>
    <property type="evidence" value="ECO:0007669"/>
    <property type="project" value="UniProtKB-UniRule"/>
</dbReference>
<dbReference type="GO" id="GO:0006210">
    <property type="term" value="P:thymine catabolic process"/>
    <property type="evidence" value="ECO:0007669"/>
    <property type="project" value="TreeGrafter"/>
</dbReference>
<dbReference type="GO" id="GO:0006574">
    <property type="term" value="P:valine catabolic process"/>
    <property type="evidence" value="ECO:0007669"/>
    <property type="project" value="TreeGrafter"/>
</dbReference>
<dbReference type="CDD" id="cd07085">
    <property type="entry name" value="ALDH_F6_MMSDH"/>
    <property type="match status" value="1"/>
</dbReference>
<dbReference type="FunFam" id="3.40.309.10:FF:000002">
    <property type="entry name" value="Methylmalonate-semialdehyde dehydrogenase (Acylating)"/>
    <property type="match status" value="1"/>
</dbReference>
<dbReference type="FunFam" id="3.40.605.10:FF:000003">
    <property type="entry name" value="Methylmalonate-semialdehyde dehydrogenase [acylating]"/>
    <property type="match status" value="1"/>
</dbReference>
<dbReference type="Gene3D" id="3.40.605.10">
    <property type="entry name" value="Aldehyde Dehydrogenase, Chain A, domain 1"/>
    <property type="match status" value="1"/>
</dbReference>
<dbReference type="Gene3D" id="3.40.309.10">
    <property type="entry name" value="Aldehyde Dehydrogenase, Chain A, domain 2"/>
    <property type="match status" value="1"/>
</dbReference>
<dbReference type="HAMAP" id="MF_01670">
    <property type="entry name" value="IolA"/>
    <property type="match status" value="1"/>
</dbReference>
<dbReference type="InterPro" id="IPR016161">
    <property type="entry name" value="Ald_DH/histidinol_DH"/>
</dbReference>
<dbReference type="InterPro" id="IPR016163">
    <property type="entry name" value="Ald_DH_C"/>
</dbReference>
<dbReference type="InterPro" id="IPR016160">
    <property type="entry name" value="Ald_DH_CS_CYS"/>
</dbReference>
<dbReference type="InterPro" id="IPR016162">
    <property type="entry name" value="Ald_DH_N"/>
</dbReference>
<dbReference type="InterPro" id="IPR015590">
    <property type="entry name" value="Aldehyde_DH_dom"/>
</dbReference>
<dbReference type="InterPro" id="IPR010061">
    <property type="entry name" value="MeMal-semiAld_DH"/>
</dbReference>
<dbReference type="InterPro" id="IPR023510">
    <property type="entry name" value="MSDH_GmP_bac"/>
</dbReference>
<dbReference type="NCBIfam" id="TIGR01722">
    <property type="entry name" value="MMSDH"/>
    <property type="match status" value="1"/>
</dbReference>
<dbReference type="PANTHER" id="PTHR43866">
    <property type="entry name" value="MALONATE-SEMIALDEHYDE DEHYDROGENASE"/>
    <property type="match status" value="1"/>
</dbReference>
<dbReference type="PANTHER" id="PTHR43866:SF4">
    <property type="entry name" value="MALONATE-SEMIALDEHYDE DEHYDROGENASE"/>
    <property type="match status" value="1"/>
</dbReference>
<dbReference type="Pfam" id="PF00171">
    <property type="entry name" value="Aldedh"/>
    <property type="match status" value="1"/>
</dbReference>
<dbReference type="SUPFAM" id="SSF53720">
    <property type="entry name" value="ALDH-like"/>
    <property type="match status" value="1"/>
</dbReference>
<dbReference type="PROSITE" id="PS00070">
    <property type="entry name" value="ALDEHYDE_DEHYDR_CYS"/>
    <property type="match status" value="1"/>
</dbReference>
<name>IOLA1_OCEIH</name>
<comment type="function">
    <text evidence="1">Catalyzes the oxidation of malonate semialdehyde (MSA) and methylmalonate semialdehyde (MMSA) into acetyl-CoA and propanoyl-CoA, respectively. Is involved in a myo-inositol catabolic pathway. Bicarbonate, and not CO2, is the end-product of the enzymatic reaction.</text>
</comment>
<comment type="catalytic activity">
    <reaction evidence="1">
        <text>3-oxopropanoate + NAD(+) + CoA + H2O = hydrogencarbonate + acetyl-CoA + NADH + H(+)</text>
        <dbReference type="Rhea" id="RHEA:76615"/>
        <dbReference type="ChEBI" id="CHEBI:15377"/>
        <dbReference type="ChEBI" id="CHEBI:15378"/>
        <dbReference type="ChEBI" id="CHEBI:17544"/>
        <dbReference type="ChEBI" id="CHEBI:33190"/>
        <dbReference type="ChEBI" id="CHEBI:57287"/>
        <dbReference type="ChEBI" id="CHEBI:57288"/>
        <dbReference type="ChEBI" id="CHEBI:57540"/>
        <dbReference type="ChEBI" id="CHEBI:57945"/>
        <dbReference type="EC" id="1.2.1.27"/>
    </reaction>
    <physiologicalReaction direction="left-to-right" evidence="1">
        <dbReference type="Rhea" id="RHEA:76616"/>
    </physiologicalReaction>
</comment>
<comment type="catalytic activity">
    <reaction evidence="1">
        <text>2-methyl-3-oxopropanoate + NAD(+) + CoA + H2O = propanoyl-CoA + hydrogencarbonate + NADH + H(+)</text>
        <dbReference type="Rhea" id="RHEA:20804"/>
        <dbReference type="ChEBI" id="CHEBI:15377"/>
        <dbReference type="ChEBI" id="CHEBI:15378"/>
        <dbReference type="ChEBI" id="CHEBI:17544"/>
        <dbReference type="ChEBI" id="CHEBI:57287"/>
        <dbReference type="ChEBI" id="CHEBI:57392"/>
        <dbReference type="ChEBI" id="CHEBI:57540"/>
        <dbReference type="ChEBI" id="CHEBI:57700"/>
        <dbReference type="ChEBI" id="CHEBI:57945"/>
        <dbReference type="EC" id="1.2.1.27"/>
    </reaction>
    <physiologicalReaction direction="left-to-right" evidence="1">
        <dbReference type="Rhea" id="RHEA:20805"/>
    </physiologicalReaction>
</comment>
<comment type="pathway">
    <text evidence="1">Polyol metabolism; myo-inositol degradation into acetyl-CoA; acetyl-CoA from myo-inositol: step 7/7.</text>
</comment>
<comment type="subunit">
    <text evidence="1">Homotetramer.</text>
</comment>
<comment type="similarity">
    <text evidence="1">Belongs to the aldehyde dehydrogenase family. IolA subfamily.</text>
</comment>
<proteinExistence type="inferred from homology"/>